<keyword id="KW-0025">Alternative splicing</keyword>
<keyword id="KW-1070">Brassinosteroid signaling pathway</keyword>
<keyword id="KW-0963">Cytoplasm</keyword>
<keyword id="KW-0539">Nucleus</keyword>
<keyword id="KW-0611">Plant defense</keyword>
<keyword id="KW-1185">Reference proteome</keyword>
<dbReference type="EMBL" id="AB023041">
    <property type="protein sequence ID" value="BAB01065.1"/>
    <property type="molecule type" value="Genomic_DNA"/>
</dbReference>
<dbReference type="EMBL" id="CP002686">
    <property type="protein sequence ID" value="AEE77102.1"/>
    <property type="molecule type" value="Genomic_DNA"/>
</dbReference>
<dbReference type="EMBL" id="CP002686">
    <property type="protein sequence ID" value="AEE77103.1"/>
    <property type="molecule type" value="Genomic_DNA"/>
</dbReference>
<dbReference type="EMBL" id="CP002686">
    <property type="protein sequence ID" value="ANM64831.1"/>
    <property type="molecule type" value="Genomic_DNA"/>
</dbReference>
<dbReference type="EMBL" id="CP002686">
    <property type="protein sequence ID" value="ANM64832.1"/>
    <property type="molecule type" value="Genomic_DNA"/>
</dbReference>
<dbReference type="EMBL" id="AF367267">
    <property type="protein sequence ID" value="AAK56256.1"/>
    <property type="molecule type" value="mRNA"/>
</dbReference>
<dbReference type="EMBL" id="AY059158">
    <property type="protein sequence ID" value="AAL15383.1"/>
    <property type="molecule type" value="mRNA"/>
</dbReference>
<dbReference type="EMBL" id="AK317352">
    <property type="protein sequence ID" value="BAH20024.1"/>
    <property type="molecule type" value="mRNA"/>
</dbReference>
<dbReference type="RefSeq" id="NP_001030770.1">
    <molecule id="Q9LU89-1"/>
    <property type="nucleotide sequence ID" value="NM_001035693.2"/>
</dbReference>
<dbReference type="RefSeq" id="NP_001326835.1">
    <molecule id="Q9LU89-1"/>
    <property type="nucleotide sequence ID" value="NM_001338774.1"/>
</dbReference>
<dbReference type="RefSeq" id="NP_001326836.1">
    <molecule id="Q9LU89-1"/>
    <property type="nucleotide sequence ID" value="NM_001338775.1"/>
</dbReference>
<dbReference type="RefSeq" id="NP_189231.1">
    <molecule id="Q9LU89-1"/>
    <property type="nucleotide sequence ID" value="NM_113506.2"/>
</dbReference>
<dbReference type="SMR" id="Q9LU89"/>
<dbReference type="BioGRID" id="7530">
    <property type="interactions" value="3"/>
</dbReference>
<dbReference type="FunCoup" id="Q9LU89">
    <property type="interactions" value="3933"/>
</dbReference>
<dbReference type="IntAct" id="Q9LU89">
    <property type="interactions" value="2"/>
</dbReference>
<dbReference type="STRING" id="3702.Q9LU89"/>
<dbReference type="ProteomicsDB" id="244587">
    <molecule id="Q9LU89-1"/>
</dbReference>
<dbReference type="EnsemblPlants" id="AT3G26020.1">
    <molecule id="Q9LU89-1"/>
    <property type="protein sequence ID" value="AT3G26020.1"/>
    <property type="gene ID" value="AT3G26020"/>
</dbReference>
<dbReference type="EnsemblPlants" id="AT3G26020.2">
    <molecule id="Q9LU89-1"/>
    <property type="protein sequence ID" value="AT3G26020.2"/>
    <property type="gene ID" value="AT3G26020"/>
</dbReference>
<dbReference type="EnsemblPlants" id="AT3G26020.5">
    <molecule id="Q9LU89-1"/>
    <property type="protein sequence ID" value="AT3G26020.5"/>
    <property type="gene ID" value="AT3G26020"/>
</dbReference>
<dbReference type="EnsemblPlants" id="AT3G26020.6">
    <molecule id="Q9LU89-1"/>
    <property type="protein sequence ID" value="AT3G26020.6"/>
    <property type="gene ID" value="AT3G26020"/>
</dbReference>
<dbReference type="GeneID" id="822199"/>
<dbReference type="Gramene" id="AT3G26020.1">
    <molecule id="Q9LU89-1"/>
    <property type="protein sequence ID" value="AT3G26020.1"/>
    <property type="gene ID" value="AT3G26020"/>
</dbReference>
<dbReference type="Gramene" id="AT3G26020.2">
    <molecule id="Q9LU89-1"/>
    <property type="protein sequence ID" value="AT3G26020.2"/>
    <property type="gene ID" value="AT3G26020"/>
</dbReference>
<dbReference type="Gramene" id="AT3G26020.5">
    <molecule id="Q9LU89-1"/>
    <property type="protein sequence ID" value="AT3G26020.5"/>
    <property type="gene ID" value="AT3G26020"/>
</dbReference>
<dbReference type="Gramene" id="AT3G26020.6">
    <molecule id="Q9LU89-1"/>
    <property type="protein sequence ID" value="AT3G26020.6"/>
    <property type="gene ID" value="AT3G26020"/>
</dbReference>
<dbReference type="KEGG" id="ath:AT3G26020"/>
<dbReference type="Araport" id="AT3G26020"/>
<dbReference type="TAIR" id="AT3G26020">
    <property type="gene designation" value="PP2AB'ETA"/>
</dbReference>
<dbReference type="HOGENOM" id="CLU_012437_4_1_1"/>
<dbReference type="InParanoid" id="Q9LU89"/>
<dbReference type="PhylomeDB" id="Q9LU89"/>
<dbReference type="PRO" id="PR:Q9LU89"/>
<dbReference type="Proteomes" id="UP000006548">
    <property type="component" value="Chromosome 3"/>
</dbReference>
<dbReference type="ExpressionAtlas" id="Q9LU89">
    <property type="expression patterns" value="baseline and differential"/>
</dbReference>
<dbReference type="GO" id="GO:0005737">
    <property type="term" value="C:cytoplasm"/>
    <property type="evidence" value="ECO:0000314"/>
    <property type="project" value="UniProtKB"/>
</dbReference>
<dbReference type="GO" id="GO:0005730">
    <property type="term" value="C:nucleolus"/>
    <property type="evidence" value="ECO:0000314"/>
    <property type="project" value="UniProtKB"/>
</dbReference>
<dbReference type="GO" id="GO:0000159">
    <property type="term" value="C:protein phosphatase type 2A complex"/>
    <property type="evidence" value="ECO:0007669"/>
    <property type="project" value="InterPro"/>
</dbReference>
<dbReference type="GO" id="GO:0019888">
    <property type="term" value="F:protein phosphatase regulator activity"/>
    <property type="evidence" value="ECO:0007669"/>
    <property type="project" value="InterPro"/>
</dbReference>
<dbReference type="GO" id="GO:0009742">
    <property type="term" value="P:brassinosteroid mediated signaling pathway"/>
    <property type="evidence" value="ECO:0007669"/>
    <property type="project" value="UniProtKB-KW"/>
</dbReference>
<dbReference type="GO" id="GO:0006952">
    <property type="term" value="P:defense response"/>
    <property type="evidence" value="ECO:0007669"/>
    <property type="project" value="UniProtKB-KW"/>
</dbReference>
<dbReference type="FunFam" id="1.25.10.10:FF:000041">
    <property type="entry name" value="Serine/threonine protein phosphatase 2A regulatory subunit"/>
    <property type="match status" value="1"/>
</dbReference>
<dbReference type="Gene3D" id="1.25.10.10">
    <property type="entry name" value="Leucine-rich Repeat Variant"/>
    <property type="match status" value="1"/>
</dbReference>
<dbReference type="InterPro" id="IPR011989">
    <property type="entry name" value="ARM-like"/>
</dbReference>
<dbReference type="InterPro" id="IPR016024">
    <property type="entry name" value="ARM-type_fold"/>
</dbReference>
<dbReference type="InterPro" id="IPR002554">
    <property type="entry name" value="PP2A_B56"/>
</dbReference>
<dbReference type="PANTHER" id="PTHR10257">
    <property type="entry name" value="SERINE/THREONINE PROTEIN PHOSPHATASE 2A PP2A REGULATORY SUBUNIT B"/>
    <property type="match status" value="1"/>
</dbReference>
<dbReference type="PANTHER" id="PTHR10257:SF66">
    <property type="entry name" value="SERINE_THREONINE PROTEIN PHOSPHATASE 2A 59 KDA REGULATORY SUBUNIT B' ETA ISOFORM"/>
    <property type="match status" value="1"/>
</dbReference>
<dbReference type="Pfam" id="PF01603">
    <property type="entry name" value="B56"/>
    <property type="match status" value="1"/>
</dbReference>
<dbReference type="PIRSF" id="PIRSF028043">
    <property type="entry name" value="PP2A_B56"/>
    <property type="match status" value="1"/>
</dbReference>
<dbReference type="SUPFAM" id="SSF48371">
    <property type="entry name" value="ARM repeat"/>
    <property type="match status" value="1"/>
</dbReference>
<accession>Q9LU89</accession>
<accession>B9DH07</accession>
<evidence type="ECO:0000250" key="1">
    <source>
        <dbReference type="UniProtKB" id="Q13362"/>
    </source>
</evidence>
<evidence type="ECO:0000256" key="2">
    <source>
        <dbReference type="SAM" id="MobiDB-lite"/>
    </source>
</evidence>
<evidence type="ECO:0000269" key="3">
    <source>
    </source>
</evidence>
<evidence type="ECO:0000269" key="4">
    <source>
    </source>
</evidence>
<evidence type="ECO:0000269" key="5">
    <source>
    </source>
</evidence>
<evidence type="ECO:0000269" key="6">
    <source>
    </source>
</evidence>
<evidence type="ECO:0000305" key="7"/>
<organism>
    <name type="scientific">Arabidopsis thaliana</name>
    <name type="common">Mouse-ear cress</name>
    <dbReference type="NCBI Taxonomy" id="3702"/>
    <lineage>
        <taxon>Eukaryota</taxon>
        <taxon>Viridiplantae</taxon>
        <taxon>Streptophyta</taxon>
        <taxon>Embryophyta</taxon>
        <taxon>Tracheophyta</taxon>
        <taxon>Spermatophyta</taxon>
        <taxon>Magnoliopsida</taxon>
        <taxon>eudicotyledons</taxon>
        <taxon>Gunneridae</taxon>
        <taxon>Pentapetalae</taxon>
        <taxon>rosids</taxon>
        <taxon>malvids</taxon>
        <taxon>Brassicales</taxon>
        <taxon>Brassicaceae</taxon>
        <taxon>Camelineae</taxon>
        <taxon>Arabidopsis</taxon>
    </lineage>
</organism>
<comment type="function">
    <text evidence="1 5 6">The B regulatory subunit may modulate substrate selectivity and catalytic activity, and may also direct the localization of the catalytic enzyme to a particular subcellular compartment (By similarity). The holoenzyme composed of PP2AA1, PP2A4 and B'ETA acts as negative regulator of plant innate immunity by controlling BAK1 phosphorylation state and activation in surface-localized immune receptor complexes (PubMed:25085430). Required for the formation of the PP2A holoenzyme that negatively regulates brassinosteroid signaling by dephosphorylating and inactivating BRI1 in the cytoplasm (PubMed:26517938).</text>
</comment>
<comment type="subunit">
    <text evidence="1 4 6">PP2A consists of a common heteromeric enzyme, composed of a catalytic subunit (subunits C), a constant regulatory subunit (subunit A), and a variety of regulatory subunits such as subunits B (the R2/B/PR55/B55, R3/B''/PR72/PR130/PR59 and R5/B'/B56 families) (By similarity). Interacts with BZR1 (PubMed:21258370). Interacts with BRI1 (PubMed:26517938).</text>
</comment>
<comment type="subcellular location">
    <subcellularLocation>
        <location evidence="3">Nucleus</location>
        <location evidence="3">Nucleolus</location>
    </subcellularLocation>
    <subcellularLocation>
        <location evidence="6">Cytoplasm</location>
    </subcellularLocation>
</comment>
<comment type="alternative products">
    <event type="alternative splicing"/>
    <isoform>
        <id>Q9LU89-1</id>
        <name>1</name>
        <sequence type="displayed"/>
    </isoform>
    <text>A number of isoforms are produced. According to EST sequences.</text>
</comment>
<comment type="induction">
    <text evidence="6">Induced by epibrassinolide.</text>
</comment>
<comment type="disruption phenotype">
    <text evidence="3">Delayed flowering.</text>
</comment>
<comment type="similarity">
    <text evidence="7">Belongs to the phosphatase 2A regulatory subunit B56 family.</text>
</comment>
<proteinExistence type="evidence at protein level"/>
<name>2A5N_ARATH</name>
<feature type="chain" id="PRO_0000071466" description="Serine/threonine protein phosphatase 2A 59 kDa regulatory subunit B' eta isoform">
    <location>
        <begin position="1"/>
        <end position="510"/>
    </location>
</feature>
<feature type="region of interest" description="Disordered" evidence="2">
    <location>
        <begin position="1"/>
        <end position="87"/>
    </location>
</feature>
<feature type="compositionally biased region" description="Basic residues" evidence="2">
    <location>
        <begin position="10"/>
        <end position="19"/>
    </location>
</feature>
<feature type="compositionally biased region" description="Low complexity" evidence="2">
    <location>
        <begin position="27"/>
        <end position="42"/>
    </location>
</feature>
<gene>
    <name type="primary">B'ETA</name>
    <name type="ordered locus">At3g26020</name>
    <name type="ORF">MPE11.19</name>
</gene>
<reference key="1">
    <citation type="journal article" date="2000" name="DNA Res.">
        <title>Structural analysis of Arabidopsis thaliana chromosome 3. I. Sequence features of the regions of 4,504,864 bp covered by sixty P1 and TAC clones.</title>
        <authorList>
            <person name="Sato S."/>
            <person name="Nakamura Y."/>
            <person name="Kaneko T."/>
            <person name="Katoh T."/>
            <person name="Asamizu E."/>
            <person name="Tabata S."/>
        </authorList>
    </citation>
    <scope>NUCLEOTIDE SEQUENCE [LARGE SCALE GENOMIC DNA]</scope>
    <source>
        <strain>cv. Columbia</strain>
    </source>
</reference>
<reference key="2">
    <citation type="journal article" date="2017" name="Plant J.">
        <title>Araport11: a complete reannotation of the Arabidopsis thaliana reference genome.</title>
        <authorList>
            <person name="Cheng C.Y."/>
            <person name="Krishnakumar V."/>
            <person name="Chan A.P."/>
            <person name="Thibaud-Nissen F."/>
            <person name="Schobel S."/>
            <person name="Town C.D."/>
        </authorList>
    </citation>
    <scope>GENOME REANNOTATION</scope>
    <source>
        <strain>cv. Columbia</strain>
    </source>
</reference>
<reference key="3">
    <citation type="journal article" date="2003" name="Science">
        <title>Empirical analysis of transcriptional activity in the Arabidopsis genome.</title>
        <authorList>
            <person name="Yamada K."/>
            <person name="Lim J."/>
            <person name="Dale J.M."/>
            <person name="Chen H."/>
            <person name="Shinn P."/>
            <person name="Palm C.J."/>
            <person name="Southwick A.M."/>
            <person name="Wu H.C."/>
            <person name="Kim C.J."/>
            <person name="Nguyen M."/>
            <person name="Pham P.K."/>
            <person name="Cheuk R.F."/>
            <person name="Karlin-Newmann G."/>
            <person name="Liu S.X."/>
            <person name="Lam B."/>
            <person name="Sakano H."/>
            <person name="Wu T."/>
            <person name="Yu G."/>
            <person name="Miranda M."/>
            <person name="Quach H.L."/>
            <person name="Tripp M."/>
            <person name="Chang C.H."/>
            <person name="Lee J.M."/>
            <person name="Toriumi M.J."/>
            <person name="Chan M.M."/>
            <person name="Tang C.C."/>
            <person name="Onodera C.S."/>
            <person name="Deng J.M."/>
            <person name="Akiyama K."/>
            <person name="Ansari Y."/>
            <person name="Arakawa T."/>
            <person name="Banh J."/>
            <person name="Banno F."/>
            <person name="Bowser L."/>
            <person name="Brooks S.Y."/>
            <person name="Carninci P."/>
            <person name="Chao Q."/>
            <person name="Choy N."/>
            <person name="Enju A."/>
            <person name="Goldsmith A.D."/>
            <person name="Gurjal M."/>
            <person name="Hansen N.F."/>
            <person name="Hayashizaki Y."/>
            <person name="Johnson-Hopson C."/>
            <person name="Hsuan V.W."/>
            <person name="Iida K."/>
            <person name="Karnes M."/>
            <person name="Khan S."/>
            <person name="Koesema E."/>
            <person name="Ishida J."/>
            <person name="Jiang P.X."/>
            <person name="Jones T."/>
            <person name="Kawai J."/>
            <person name="Kamiya A."/>
            <person name="Meyers C."/>
            <person name="Nakajima M."/>
            <person name="Narusaka M."/>
            <person name="Seki M."/>
            <person name="Sakurai T."/>
            <person name="Satou M."/>
            <person name="Tamse R."/>
            <person name="Vaysberg M."/>
            <person name="Wallender E.K."/>
            <person name="Wong C."/>
            <person name="Yamamura Y."/>
            <person name="Yuan S."/>
            <person name="Shinozaki K."/>
            <person name="Davis R.W."/>
            <person name="Theologis A."/>
            <person name="Ecker J.R."/>
        </authorList>
    </citation>
    <scope>NUCLEOTIDE SEQUENCE [LARGE SCALE MRNA]</scope>
    <source>
        <strain>cv. Columbia</strain>
    </source>
</reference>
<reference key="4">
    <citation type="journal article" date="2009" name="DNA Res.">
        <title>Analysis of multiple occurrences of alternative splicing events in Arabidopsis thaliana using novel sequenced full-length cDNAs.</title>
        <authorList>
            <person name="Iida K."/>
            <person name="Fukami-Kobayashi K."/>
            <person name="Toyoda A."/>
            <person name="Sakaki Y."/>
            <person name="Kobayashi M."/>
            <person name="Seki M."/>
            <person name="Shinozaki K."/>
        </authorList>
    </citation>
    <scope>NUCLEOTIDE SEQUENCE [LARGE SCALE MRNA]</scope>
    <source>
        <strain>cv. Columbia</strain>
    </source>
</reference>
<reference key="5">
    <citation type="journal article" date="2002" name="Plant Physiol.">
        <title>Molecular characterization and evolution of the protein phosphatase 2A B' regulatory subunit family in plants.</title>
        <authorList>
            <person name="Terol J."/>
            <person name="Bargues M."/>
            <person name="Carrasco P."/>
            <person name="Perez-Alonso M."/>
            <person name="Paricio N."/>
        </authorList>
    </citation>
    <scope>NOMENCLATURE</scope>
</reference>
<reference key="6">
    <citation type="journal article" date="2009" name="Planta">
        <title>Diversity in subcellular targeting of the PP2A B'eta subfamily members.</title>
        <authorList>
            <person name="Matre P."/>
            <person name="Meyer C."/>
            <person name="Lillo C."/>
        </authorList>
    </citation>
    <scope>SUBCELLULAR LOCATION</scope>
    <scope>DISRUPTION PHENOTYPE</scope>
</reference>
<reference key="7">
    <citation type="journal article" date="2011" name="Nat. Cell Biol.">
        <title>PP2A activates brassinosteroid-responsive gene expression and plant growth by dephosphorylating BZR1.</title>
        <authorList>
            <person name="Tang W."/>
            <person name="Yuan M."/>
            <person name="Wang R."/>
            <person name="Yang Y."/>
            <person name="Wang C."/>
            <person name="Oses-Prieto J.A."/>
            <person name="Kim T.W."/>
            <person name="Zhou H.W."/>
            <person name="Deng Z."/>
            <person name="Gampala S.S."/>
            <person name="Gendron J.M."/>
            <person name="Jonassen E.M."/>
            <person name="Lillo C."/>
            <person name="DeLong A."/>
            <person name="Burlingame A.L."/>
            <person name="Sun Y."/>
            <person name="Wang Z.Y."/>
        </authorList>
    </citation>
    <scope>INTERACTION WITH BZR1</scope>
</reference>
<reference key="8">
    <citation type="journal article" date="2014" name="EMBO J.">
        <title>Negative control of BAK1 by protein phosphatase 2A during plant innate immunity.</title>
        <authorList>
            <person name="Segonzac C."/>
            <person name="Macho A.P."/>
            <person name="Sanmartin M."/>
            <person name="Ntoukakis V."/>
            <person name="Sanchez-Serrano J.J."/>
            <person name="Zipfel C."/>
        </authorList>
    </citation>
    <scope>FUNCTION</scope>
</reference>
<reference key="9">
    <citation type="journal article" date="2016" name="Mol. Plant">
        <title>The brassinosteroid-activated BRI1 receptor kinase is switched off by dephosphorylation mediated by cytoplasm-localized PP2A B' subunits.</title>
        <authorList>
            <person name="Wang R."/>
            <person name="Liu M."/>
            <person name="Yuan M."/>
            <person name="Oses-Prieto J.A."/>
            <person name="Cai X."/>
            <person name="Sun Y."/>
            <person name="Burlingame A.L."/>
            <person name="Wang Z.Y."/>
            <person name="Tang W."/>
        </authorList>
    </citation>
    <scope>FUNCTION</scope>
    <scope>INTERACTION WITH BRI1</scope>
    <scope>SUBCELLULAR LOCATION</scope>
    <scope>INDUCTION BY EPIBRASSINOLIDE</scope>
</reference>
<sequence>MWKQILSKLPNKKSSKHEHRGREHGGHSSSSSHTSGASTSKSTDNGAAKSHAKNASPAGKSAASDSGFKDGNLKSSGNNNNNNNNGVFTPYEALPSFKDVPNTEKQNLFIKKLNLCRVVFDFTDPTKNIKEKDIKRQTLLELVDYVNSPNGKFSEVGIQEVVRMVSANIFRTLNPQPRENKVIDALDLEEEEPSMDLAWPHLQLVYELFLRFVASPETDTKLAKRYIDQSFVLRLLDLFDSEDPRERDCLKTILHRIYGKFMVHRPFIRKSINNIFYRFVFETEKHNGIAEFLEILGSIINGFALPLKDEHKVFLVRVLIPLHKPKCLQMYHQQLSYCITQFVEKDCKLADTVIRGLLKYWPVTNSSKEVMFLNELEEVLEATQPPEFQRCMVPLFRQIARCLNSLHFQVAERALFLWNNNHIENLIMQNRKVILPIIFPALERNAQKHWNQAVHSLTLNVRKIFHDLDPELFKECLAKFKEDESKAAETEAKREATWKRLEELGVRKAS</sequence>
<protein>
    <recommendedName>
        <fullName>Serine/threonine protein phosphatase 2A 59 kDa regulatory subunit B' eta isoform</fullName>
        <shortName>AtB' eta</shortName>
        <shortName>PP2A, B' subunit, eta isoform</shortName>
    </recommendedName>
</protein>